<sequence>MSGRKKLTPPTHFDPEYLFKKYELLRKSVYKKFKDKMINQSDREDLMGTIDQIFLQLVSEYNPNRGVDFPYYIKRMLELRTYHHITKYLKRINGETSLYVKNEDGEVLELQDTIADMHAEEIFSRIVDLHSINPYMELGEKHRNLMIGLFIRKKTLQELAQEEGVPLDRLHARLYFLIRKFEKEHQIDTEIFGEDLY</sequence>
<reference key="1">
    <citation type="journal article" date="1984" name="J. Mol. Biol.">
        <title>Bacteriophage SPO1 genes 33 and 34. Location and primary structure of genes encoding regulatory subunits of Bacillus subtilis RNA polymerase.</title>
        <authorList>
            <person name="Costanzo M."/>
            <person name="Brzustowicz L."/>
            <person name="Hannett N."/>
            <person name="Pero J."/>
        </authorList>
    </citation>
    <scope>NUCLEOTIDE SEQUENCE [GENOMIC DNA]</scope>
</reference>
<organismHost>
    <name type="scientific">Bacillus subtilis</name>
    <dbReference type="NCBI Taxonomy" id="1423"/>
</organismHost>
<dbReference type="EMBL" id="X01807">
    <property type="protein sequence ID" value="CAA25950.1"/>
    <property type="molecule type" value="Genomic_DNA"/>
</dbReference>
<dbReference type="PIR" id="S08577">
    <property type="entry name" value="S08577"/>
</dbReference>
<dbReference type="RefSeq" id="YP_002300430.1">
    <property type="nucleotide sequence ID" value="NC_011421.1"/>
</dbReference>
<dbReference type="SMR" id="P06227"/>
<dbReference type="GeneID" id="7009148"/>
<dbReference type="KEGG" id="vg:7009148"/>
<dbReference type="GO" id="GO:0003677">
    <property type="term" value="F:DNA binding"/>
    <property type="evidence" value="ECO:0007669"/>
    <property type="project" value="UniProtKB-KW"/>
</dbReference>
<dbReference type="GO" id="GO:0016987">
    <property type="term" value="F:sigma factor activity"/>
    <property type="evidence" value="ECO:0007669"/>
    <property type="project" value="UniProtKB-KW"/>
</dbReference>
<accession>P06227</accession>
<name>RP34_BPSP1</name>
<gene>
    <name type="primary">34</name>
</gene>
<organism>
    <name type="scientific">Bacillus phage SP01</name>
    <name type="common">Bacteriophage SP01</name>
    <dbReference type="NCBI Taxonomy" id="2884427"/>
    <lineage>
        <taxon>Viruses</taxon>
        <taxon>Duplodnaviria</taxon>
        <taxon>Heunggongvirae</taxon>
        <taxon>Uroviricota</taxon>
        <taxon>Caudoviricetes</taxon>
        <taxon>Herelleviridae</taxon>
        <taxon>Spounavirinae</taxon>
        <taxon>Okubovirus</taxon>
        <taxon>Okubovirus SPO1</taxon>
    </lineage>
</organism>
<keyword id="KW-0238">DNA-binding</keyword>
<keyword id="KW-0731">Sigma factor</keyword>
<keyword id="KW-0804">Transcription</keyword>
<keyword id="KW-0805">Transcription regulation</keyword>
<feature type="chain" id="PRO_0000094026" description="RNA polymerase sigma GP34 factor">
    <location>
        <begin position="1"/>
        <end position="197"/>
    </location>
</feature>
<comment type="function">
    <text>Sigma factors are initiation factors that promote the attachment of RNA polymerase to specific initiation sites and are then released.</text>
</comment>
<protein>
    <recommendedName>
        <fullName>RNA polymerase sigma GP34 factor</fullName>
    </recommendedName>
</protein>
<proteinExistence type="predicted"/>